<organism>
    <name type="scientific">Monosiga brevicollis</name>
    <name type="common">Choanoflagellate</name>
    <dbReference type="NCBI Taxonomy" id="81824"/>
    <lineage>
        <taxon>Eukaryota</taxon>
        <taxon>Choanoflagellata</taxon>
        <taxon>Craspedida</taxon>
        <taxon>Salpingoecidae</taxon>
        <taxon>Monosiga</taxon>
    </lineage>
</organism>
<accession>A9UWF0</accession>
<feature type="chain" id="PRO_0000344500" description="SURF1-like protein">
    <location>
        <begin position="1"/>
        <end position="261"/>
    </location>
</feature>
<feature type="transmembrane region" description="Helical" evidence="2">
    <location>
        <begin position="17"/>
        <end position="37"/>
    </location>
</feature>
<feature type="transmembrane region" description="Helical" evidence="2">
    <location>
        <begin position="223"/>
        <end position="243"/>
    </location>
</feature>
<name>SURF1_MONBE</name>
<gene>
    <name type="ORF">18583</name>
</gene>
<comment type="function">
    <text evidence="1">Probably involved in the biogenesis of the COX complex.</text>
</comment>
<comment type="subcellular location">
    <subcellularLocation>
        <location evidence="1">Mitochondrion inner membrane</location>
        <topology evidence="1">Multi-pass membrane protein</topology>
    </subcellularLocation>
</comment>
<comment type="similarity">
    <text evidence="3">Belongs to the SURF1 family.</text>
</comment>
<protein>
    <recommendedName>
        <fullName>SURF1-like protein</fullName>
    </recommendedName>
</protein>
<proteinExistence type="inferred from homology"/>
<keyword id="KW-0472">Membrane</keyword>
<keyword id="KW-0496">Mitochondrion</keyword>
<keyword id="KW-0999">Mitochondrion inner membrane</keyword>
<keyword id="KW-1185">Reference proteome</keyword>
<keyword id="KW-0812">Transmembrane</keyword>
<keyword id="KW-1133">Transmembrane helix</keyword>
<evidence type="ECO:0000250" key="1"/>
<evidence type="ECO:0000255" key="2"/>
<evidence type="ECO:0000305" key="3"/>
<sequence length="261" mass="28531">MATSSSVAAASKRGGGLYWALLSVPVVTFGLGTWQIFRKQQKEELIATLEAKLSKEPAALPTNPADLAHMEYERVAVTGTFLHDQEMLVGPRTVTREVFSGMADLPEAGVQVITPFRLADTGEVILVNRGFVPEAQAPPHKRAAGQVEGTVRLEGIVRHGESQTAFVPDNHPEQNTWYWIDVFTMASNRSALPVLIDATAECTPPGGFPLGGQTNITVRNEHLSYIITWYSISAITLAMWVFLRRKGGNRSGLRAPPPRRT</sequence>
<dbReference type="EMBL" id="CH991547">
    <property type="protein sequence ID" value="EDQ90553.1"/>
    <property type="molecule type" value="Genomic_DNA"/>
</dbReference>
<dbReference type="RefSeq" id="XP_001744604.1">
    <property type="nucleotide sequence ID" value="XM_001744552.1"/>
</dbReference>
<dbReference type="SMR" id="A9UWF0"/>
<dbReference type="FunCoup" id="A9UWF0">
    <property type="interactions" value="646"/>
</dbReference>
<dbReference type="STRING" id="81824.A9UWF0"/>
<dbReference type="EnsemblProtists" id="EDQ90553">
    <property type="protein sequence ID" value="EDQ90553"/>
    <property type="gene ID" value="MONBRDRAFT_18583"/>
</dbReference>
<dbReference type="KEGG" id="mbr:MONBRDRAFT_18583"/>
<dbReference type="eggNOG" id="KOG1563">
    <property type="taxonomic scope" value="Eukaryota"/>
</dbReference>
<dbReference type="InParanoid" id="A9UWF0"/>
<dbReference type="OMA" id="WYSRDVA"/>
<dbReference type="Proteomes" id="UP000001357">
    <property type="component" value="Unassembled WGS sequence"/>
</dbReference>
<dbReference type="GO" id="GO:0005743">
    <property type="term" value="C:mitochondrial inner membrane"/>
    <property type="evidence" value="ECO:0007669"/>
    <property type="project" value="UniProtKB-SubCell"/>
</dbReference>
<dbReference type="GO" id="GO:0005739">
    <property type="term" value="C:mitochondrion"/>
    <property type="evidence" value="ECO:0000318"/>
    <property type="project" value="GO_Central"/>
</dbReference>
<dbReference type="GO" id="GO:0033617">
    <property type="term" value="P:mitochondrial cytochrome c oxidase assembly"/>
    <property type="evidence" value="ECO:0000318"/>
    <property type="project" value="GO_Central"/>
</dbReference>
<dbReference type="CDD" id="cd06662">
    <property type="entry name" value="SURF1"/>
    <property type="match status" value="1"/>
</dbReference>
<dbReference type="InterPro" id="IPR002994">
    <property type="entry name" value="Surf1/Shy1"/>
</dbReference>
<dbReference type="InterPro" id="IPR045214">
    <property type="entry name" value="Surf1/Surf4"/>
</dbReference>
<dbReference type="PANTHER" id="PTHR23427">
    <property type="entry name" value="SURFEIT LOCUS PROTEIN"/>
    <property type="match status" value="1"/>
</dbReference>
<dbReference type="PANTHER" id="PTHR23427:SF2">
    <property type="entry name" value="SURFEIT LOCUS PROTEIN 1"/>
    <property type="match status" value="1"/>
</dbReference>
<dbReference type="Pfam" id="PF02104">
    <property type="entry name" value="SURF1"/>
    <property type="match status" value="1"/>
</dbReference>
<dbReference type="PROSITE" id="PS50895">
    <property type="entry name" value="SURF1"/>
    <property type="match status" value="1"/>
</dbReference>
<reference key="1">
    <citation type="journal article" date="2008" name="Nature">
        <title>The genome of the choanoflagellate Monosiga brevicollis and the origin of metazoans.</title>
        <authorList>
            <consortium name="JGI Sequencing"/>
            <person name="King N."/>
            <person name="Westbrook M.J."/>
            <person name="Young S.L."/>
            <person name="Kuo A."/>
            <person name="Abedin M."/>
            <person name="Chapman J."/>
            <person name="Fairclough S."/>
            <person name="Hellsten U."/>
            <person name="Isogai Y."/>
            <person name="Letunic I."/>
            <person name="Marr M."/>
            <person name="Pincus D."/>
            <person name="Putnam N."/>
            <person name="Rokas A."/>
            <person name="Wright K.J."/>
            <person name="Zuzow R."/>
            <person name="Dirks W."/>
            <person name="Good M."/>
            <person name="Goodstein D."/>
            <person name="Lemons D."/>
            <person name="Li W."/>
            <person name="Lyons J.B."/>
            <person name="Morris A."/>
            <person name="Nichols S."/>
            <person name="Richter D.J."/>
            <person name="Salamov A."/>
            <person name="Bork P."/>
            <person name="Lim W.A."/>
            <person name="Manning G."/>
            <person name="Miller W.T."/>
            <person name="McGinnis W."/>
            <person name="Shapiro H."/>
            <person name="Tjian R."/>
            <person name="Grigoriev I.V."/>
            <person name="Rokhsar D."/>
        </authorList>
    </citation>
    <scope>NUCLEOTIDE SEQUENCE [LARGE SCALE GENOMIC DNA]</scope>
    <source>
        <strain>MX1 / ATCC 50154</strain>
    </source>
</reference>